<organism>
    <name type="scientific">Myxococcus xanthus (strain DK1622)</name>
    <dbReference type="NCBI Taxonomy" id="246197"/>
    <lineage>
        <taxon>Bacteria</taxon>
        <taxon>Pseudomonadati</taxon>
        <taxon>Myxococcota</taxon>
        <taxon>Myxococcia</taxon>
        <taxon>Myxococcales</taxon>
        <taxon>Cystobacterineae</taxon>
        <taxon>Myxococcaceae</taxon>
        <taxon>Myxococcus</taxon>
    </lineage>
</organism>
<accession>Q1DCA2</accession>
<name>GATB_MYXXD</name>
<sequence length="479" mass="52679">MPVSDFQPVIGLEVHAQLLTQSKIFCGCSTAFGAEPNRNTCPVCLGMPGVLPVLNQRVAEFAVRTGLALECTIRPTSVWSRKNYFYPDLPKGYQITQFDQPICEHGRLVIDTPQGEKAIRILRIHMEEDAGKSVHDAGGGQSLVDLNRAGVPLLEIVSQPDLRDADEAVEYLKAMRDVLVYLGVNDGNLEEGSFRCDANVSVMPKGSTTFGQRCELKNLNSFRFLKQAIEYEIARQVDVIESGGKVVQETRLWDVNKGVTRSMRSKEEAHDYRYFPEPDLPPLHVSAEAIAAAAKALPELPRAKLQRFTSQYGLPAYDARILTAERPLADYFEACAGHYKDYKKLSNWFLGELMRLLKEEGTPLSALRFTPAQLGELLGAVDQGMVSANAGKDVLGEMFRTGKAPADIIAEKGLAQVSDTGAIEAVVDDILAKNAGEIEKYRAGKKQVFGFFVGQVMRAMKGKGNPALVNELLKKKLGD</sequence>
<feature type="chain" id="PRO_1000016006" description="Aspartyl/glutamyl-tRNA(Asn/Gln) amidotransferase subunit B">
    <location>
        <begin position="1"/>
        <end position="479"/>
    </location>
</feature>
<proteinExistence type="inferred from homology"/>
<reference key="1">
    <citation type="journal article" date="2006" name="Proc. Natl. Acad. Sci. U.S.A.">
        <title>Evolution of sensory complexity recorded in a myxobacterial genome.</title>
        <authorList>
            <person name="Goldman B.S."/>
            <person name="Nierman W.C."/>
            <person name="Kaiser D."/>
            <person name="Slater S.C."/>
            <person name="Durkin A.S."/>
            <person name="Eisen J.A."/>
            <person name="Ronning C.M."/>
            <person name="Barbazuk W.B."/>
            <person name="Blanchard M."/>
            <person name="Field C."/>
            <person name="Halling C."/>
            <person name="Hinkle G."/>
            <person name="Iartchuk O."/>
            <person name="Kim H.S."/>
            <person name="Mackenzie C."/>
            <person name="Madupu R."/>
            <person name="Miller N."/>
            <person name="Shvartsbeyn A."/>
            <person name="Sullivan S.A."/>
            <person name="Vaudin M."/>
            <person name="Wiegand R."/>
            <person name="Kaplan H.B."/>
        </authorList>
    </citation>
    <scope>NUCLEOTIDE SEQUENCE [LARGE SCALE GENOMIC DNA]</scope>
    <source>
        <strain>DK1622</strain>
    </source>
</reference>
<dbReference type="EC" id="6.3.5.-" evidence="1"/>
<dbReference type="EMBL" id="CP000113">
    <property type="protein sequence ID" value="ABF88634.1"/>
    <property type="molecule type" value="Genomic_DNA"/>
</dbReference>
<dbReference type="RefSeq" id="WP_011551580.1">
    <property type="nucleotide sequence ID" value="NC_008095.1"/>
</dbReference>
<dbReference type="SMR" id="Q1DCA2"/>
<dbReference type="STRING" id="246197.MXAN_1464"/>
<dbReference type="EnsemblBacteria" id="ABF88634">
    <property type="protein sequence ID" value="ABF88634"/>
    <property type="gene ID" value="MXAN_1464"/>
</dbReference>
<dbReference type="GeneID" id="41358910"/>
<dbReference type="KEGG" id="mxa:MXAN_1464"/>
<dbReference type="eggNOG" id="COG0064">
    <property type="taxonomic scope" value="Bacteria"/>
</dbReference>
<dbReference type="HOGENOM" id="CLU_019240_4_0_7"/>
<dbReference type="OrthoDB" id="9804078at2"/>
<dbReference type="Proteomes" id="UP000002402">
    <property type="component" value="Chromosome"/>
</dbReference>
<dbReference type="GO" id="GO:0050566">
    <property type="term" value="F:asparaginyl-tRNA synthase (glutamine-hydrolyzing) activity"/>
    <property type="evidence" value="ECO:0007669"/>
    <property type="project" value="RHEA"/>
</dbReference>
<dbReference type="GO" id="GO:0005524">
    <property type="term" value="F:ATP binding"/>
    <property type="evidence" value="ECO:0007669"/>
    <property type="project" value="UniProtKB-KW"/>
</dbReference>
<dbReference type="GO" id="GO:0050567">
    <property type="term" value="F:glutaminyl-tRNA synthase (glutamine-hydrolyzing) activity"/>
    <property type="evidence" value="ECO:0007669"/>
    <property type="project" value="UniProtKB-UniRule"/>
</dbReference>
<dbReference type="GO" id="GO:0070681">
    <property type="term" value="P:glutaminyl-tRNAGln biosynthesis via transamidation"/>
    <property type="evidence" value="ECO:0007669"/>
    <property type="project" value="TreeGrafter"/>
</dbReference>
<dbReference type="GO" id="GO:0006412">
    <property type="term" value="P:translation"/>
    <property type="evidence" value="ECO:0007669"/>
    <property type="project" value="UniProtKB-UniRule"/>
</dbReference>
<dbReference type="FunFam" id="1.10.10.410:FF:000001">
    <property type="entry name" value="Aspartyl/glutamyl-tRNA(Asn/Gln) amidotransferase subunit B"/>
    <property type="match status" value="1"/>
</dbReference>
<dbReference type="FunFam" id="1.10.150.380:FF:000001">
    <property type="entry name" value="Aspartyl/glutamyl-tRNA(Asn/Gln) amidotransferase subunit B"/>
    <property type="match status" value="1"/>
</dbReference>
<dbReference type="Gene3D" id="1.10.10.410">
    <property type="match status" value="1"/>
</dbReference>
<dbReference type="Gene3D" id="1.10.150.380">
    <property type="entry name" value="GatB domain, N-terminal subdomain"/>
    <property type="match status" value="1"/>
</dbReference>
<dbReference type="HAMAP" id="MF_00121">
    <property type="entry name" value="GatB"/>
    <property type="match status" value="1"/>
</dbReference>
<dbReference type="InterPro" id="IPR017959">
    <property type="entry name" value="Asn/Gln-tRNA_amidoTrfase_suB/E"/>
</dbReference>
<dbReference type="InterPro" id="IPR006075">
    <property type="entry name" value="Asn/Gln-tRNA_Trfase_suB/E_cat"/>
</dbReference>
<dbReference type="InterPro" id="IPR018027">
    <property type="entry name" value="Asn/Gln_amidotransferase"/>
</dbReference>
<dbReference type="InterPro" id="IPR003789">
    <property type="entry name" value="Asn/Gln_tRNA_amidoTrase-B-like"/>
</dbReference>
<dbReference type="InterPro" id="IPR004413">
    <property type="entry name" value="GatB"/>
</dbReference>
<dbReference type="InterPro" id="IPR042114">
    <property type="entry name" value="GatB_C_1"/>
</dbReference>
<dbReference type="InterPro" id="IPR023168">
    <property type="entry name" value="GatB_Yqey_C_2"/>
</dbReference>
<dbReference type="InterPro" id="IPR017958">
    <property type="entry name" value="Gln-tRNA_amidoTrfase_suB_CS"/>
</dbReference>
<dbReference type="InterPro" id="IPR014746">
    <property type="entry name" value="Gln_synth/guanido_kin_cat_dom"/>
</dbReference>
<dbReference type="NCBIfam" id="TIGR00133">
    <property type="entry name" value="gatB"/>
    <property type="match status" value="1"/>
</dbReference>
<dbReference type="NCBIfam" id="NF004012">
    <property type="entry name" value="PRK05477.1-2"/>
    <property type="match status" value="1"/>
</dbReference>
<dbReference type="NCBIfam" id="NF004014">
    <property type="entry name" value="PRK05477.1-4"/>
    <property type="match status" value="1"/>
</dbReference>
<dbReference type="NCBIfam" id="NF004015">
    <property type="entry name" value="PRK05477.1-5"/>
    <property type="match status" value="1"/>
</dbReference>
<dbReference type="PANTHER" id="PTHR11659">
    <property type="entry name" value="GLUTAMYL-TRNA GLN AMIDOTRANSFERASE SUBUNIT B MITOCHONDRIAL AND PROKARYOTIC PET112-RELATED"/>
    <property type="match status" value="1"/>
</dbReference>
<dbReference type="PANTHER" id="PTHR11659:SF0">
    <property type="entry name" value="GLUTAMYL-TRNA(GLN) AMIDOTRANSFERASE SUBUNIT B, MITOCHONDRIAL"/>
    <property type="match status" value="1"/>
</dbReference>
<dbReference type="Pfam" id="PF02934">
    <property type="entry name" value="GatB_N"/>
    <property type="match status" value="1"/>
</dbReference>
<dbReference type="Pfam" id="PF02637">
    <property type="entry name" value="GatB_Yqey"/>
    <property type="match status" value="1"/>
</dbReference>
<dbReference type="SMART" id="SM00845">
    <property type="entry name" value="GatB_Yqey"/>
    <property type="match status" value="1"/>
</dbReference>
<dbReference type="SUPFAM" id="SSF89095">
    <property type="entry name" value="GatB/YqeY motif"/>
    <property type="match status" value="1"/>
</dbReference>
<dbReference type="SUPFAM" id="SSF55931">
    <property type="entry name" value="Glutamine synthetase/guanido kinase"/>
    <property type="match status" value="1"/>
</dbReference>
<dbReference type="PROSITE" id="PS01234">
    <property type="entry name" value="GATB"/>
    <property type="match status" value="1"/>
</dbReference>
<protein>
    <recommendedName>
        <fullName evidence="1">Aspartyl/glutamyl-tRNA(Asn/Gln) amidotransferase subunit B</fullName>
        <shortName evidence="1">Asp/Glu-ADT subunit B</shortName>
        <ecNumber evidence="1">6.3.5.-</ecNumber>
    </recommendedName>
</protein>
<gene>
    <name evidence="1" type="primary">gatB</name>
    <name type="ordered locus">MXAN_1464</name>
</gene>
<evidence type="ECO:0000255" key="1">
    <source>
        <dbReference type="HAMAP-Rule" id="MF_00121"/>
    </source>
</evidence>
<keyword id="KW-0067">ATP-binding</keyword>
<keyword id="KW-0436">Ligase</keyword>
<keyword id="KW-0547">Nucleotide-binding</keyword>
<keyword id="KW-0648">Protein biosynthesis</keyword>
<keyword id="KW-1185">Reference proteome</keyword>
<comment type="function">
    <text evidence="1">Allows the formation of correctly charged Asn-tRNA(Asn) or Gln-tRNA(Gln) through the transamidation of misacylated Asp-tRNA(Asn) or Glu-tRNA(Gln) in organisms which lack either or both of asparaginyl-tRNA or glutaminyl-tRNA synthetases. The reaction takes place in the presence of glutamine and ATP through an activated phospho-Asp-tRNA(Asn) or phospho-Glu-tRNA(Gln).</text>
</comment>
<comment type="catalytic activity">
    <reaction evidence="1">
        <text>L-glutamyl-tRNA(Gln) + L-glutamine + ATP + H2O = L-glutaminyl-tRNA(Gln) + L-glutamate + ADP + phosphate + H(+)</text>
        <dbReference type="Rhea" id="RHEA:17521"/>
        <dbReference type="Rhea" id="RHEA-COMP:9681"/>
        <dbReference type="Rhea" id="RHEA-COMP:9684"/>
        <dbReference type="ChEBI" id="CHEBI:15377"/>
        <dbReference type="ChEBI" id="CHEBI:15378"/>
        <dbReference type="ChEBI" id="CHEBI:29985"/>
        <dbReference type="ChEBI" id="CHEBI:30616"/>
        <dbReference type="ChEBI" id="CHEBI:43474"/>
        <dbReference type="ChEBI" id="CHEBI:58359"/>
        <dbReference type="ChEBI" id="CHEBI:78520"/>
        <dbReference type="ChEBI" id="CHEBI:78521"/>
        <dbReference type="ChEBI" id="CHEBI:456216"/>
    </reaction>
</comment>
<comment type="catalytic activity">
    <reaction evidence="1">
        <text>L-aspartyl-tRNA(Asn) + L-glutamine + ATP + H2O = L-asparaginyl-tRNA(Asn) + L-glutamate + ADP + phosphate + 2 H(+)</text>
        <dbReference type="Rhea" id="RHEA:14513"/>
        <dbReference type="Rhea" id="RHEA-COMP:9674"/>
        <dbReference type="Rhea" id="RHEA-COMP:9677"/>
        <dbReference type="ChEBI" id="CHEBI:15377"/>
        <dbReference type="ChEBI" id="CHEBI:15378"/>
        <dbReference type="ChEBI" id="CHEBI:29985"/>
        <dbReference type="ChEBI" id="CHEBI:30616"/>
        <dbReference type="ChEBI" id="CHEBI:43474"/>
        <dbReference type="ChEBI" id="CHEBI:58359"/>
        <dbReference type="ChEBI" id="CHEBI:78515"/>
        <dbReference type="ChEBI" id="CHEBI:78516"/>
        <dbReference type="ChEBI" id="CHEBI:456216"/>
    </reaction>
</comment>
<comment type="subunit">
    <text evidence="1">Heterotrimer of A, B and C subunits.</text>
</comment>
<comment type="similarity">
    <text evidence="1">Belongs to the GatB/GatE family. GatB subfamily.</text>
</comment>